<dbReference type="EC" id="3.5.3.24" evidence="3"/>
<dbReference type="EMBL" id="BA000022">
    <property type="protein sequence ID" value="BAA16710.1"/>
    <property type="molecule type" value="Genomic_DNA"/>
</dbReference>
<dbReference type="PIR" id="S74558">
    <property type="entry name" value="S74558"/>
</dbReference>
<dbReference type="SMR" id="P72703"/>
<dbReference type="IntAct" id="P72703">
    <property type="interactions" value="1"/>
</dbReference>
<dbReference type="STRING" id="1148.gene:10497565"/>
<dbReference type="PaxDb" id="1148-1651783"/>
<dbReference type="EnsemblBacteria" id="BAA16710">
    <property type="protein sequence ID" value="BAA16710"/>
    <property type="gene ID" value="BAA16710"/>
</dbReference>
<dbReference type="KEGG" id="syn:sll0228"/>
<dbReference type="eggNOG" id="COG0010">
    <property type="taxonomic scope" value="Bacteria"/>
</dbReference>
<dbReference type="InParanoid" id="P72703"/>
<dbReference type="PhylomeDB" id="P72703"/>
<dbReference type="UniPathway" id="UPA00248"/>
<dbReference type="Proteomes" id="UP000001425">
    <property type="component" value="Chromosome"/>
</dbReference>
<dbReference type="GO" id="GO:0008783">
    <property type="term" value="F:agmatinase activity"/>
    <property type="evidence" value="ECO:0000318"/>
    <property type="project" value="GO_Central"/>
</dbReference>
<dbReference type="GO" id="GO:0043920">
    <property type="term" value="F:aminopropylagmatine ureohydrolase activity"/>
    <property type="evidence" value="ECO:0007669"/>
    <property type="project" value="RHEA"/>
</dbReference>
<dbReference type="GO" id="GO:0046872">
    <property type="term" value="F:metal ion binding"/>
    <property type="evidence" value="ECO:0007669"/>
    <property type="project" value="UniProtKB-KW"/>
</dbReference>
<dbReference type="GO" id="GO:0033389">
    <property type="term" value="P:putrescine biosynthetic process from arginine, via agmatine"/>
    <property type="evidence" value="ECO:0000318"/>
    <property type="project" value="GO_Central"/>
</dbReference>
<dbReference type="GO" id="GO:0008295">
    <property type="term" value="P:spermidine biosynthetic process"/>
    <property type="evidence" value="ECO:0007669"/>
    <property type="project" value="UniProtKB-KW"/>
</dbReference>
<dbReference type="CDD" id="cd11593">
    <property type="entry name" value="Agmatinase-like_2"/>
    <property type="match status" value="1"/>
</dbReference>
<dbReference type="Gene3D" id="3.40.800.10">
    <property type="entry name" value="Ureohydrolase domain"/>
    <property type="match status" value="1"/>
</dbReference>
<dbReference type="InterPro" id="IPR005925">
    <property type="entry name" value="Agmatinase-rel"/>
</dbReference>
<dbReference type="InterPro" id="IPR006035">
    <property type="entry name" value="Ureohydrolase"/>
</dbReference>
<dbReference type="InterPro" id="IPR023696">
    <property type="entry name" value="Ureohydrolase_dom_sf"/>
</dbReference>
<dbReference type="InterPro" id="IPR020855">
    <property type="entry name" value="Ureohydrolase_Mn_BS"/>
</dbReference>
<dbReference type="NCBIfam" id="TIGR01230">
    <property type="entry name" value="agmatinase"/>
    <property type="match status" value="1"/>
</dbReference>
<dbReference type="PANTHER" id="PTHR11358">
    <property type="entry name" value="ARGINASE/AGMATINASE"/>
    <property type="match status" value="1"/>
</dbReference>
<dbReference type="PANTHER" id="PTHR11358:SF26">
    <property type="entry name" value="GUANIDINO ACID HYDROLASE, MITOCHONDRIAL"/>
    <property type="match status" value="1"/>
</dbReference>
<dbReference type="Pfam" id="PF00491">
    <property type="entry name" value="Arginase"/>
    <property type="match status" value="1"/>
</dbReference>
<dbReference type="PIRSF" id="PIRSF036979">
    <property type="entry name" value="Arginase"/>
    <property type="match status" value="1"/>
</dbReference>
<dbReference type="SUPFAM" id="SSF52768">
    <property type="entry name" value="Arginase/deacetylase"/>
    <property type="match status" value="1"/>
</dbReference>
<dbReference type="PROSITE" id="PS01053">
    <property type="entry name" value="ARGINASE_1"/>
    <property type="match status" value="1"/>
</dbReference>
<dbReference type="PROSITE" id="PS51409">
    <property type="entry name" value="ARGINASE_2"/>
    <property type="match status" value="1"/>
</dbReference>
<reference key="1">
    <citation type="journal article" date="1996" name="DNA Res.">
        <title>Sequence analysis of the genome of the unicellular cyanobacterium Synechocystis sp. strain PCC6803. II. Sequence determination of the entire genome and assignment of potential protein-coding regions.</title>
        <authorList>
            <person name="Kaneko T."/>
            <person name="Sato S."/>
            <person name="Kotani H."/>
            <person name="Tanaka A."/>
            <person name="Asamizu E."/>
            <person name="Nakamura Y."/>
            <person name="Miyajima N."/>
            <person name="Hirosawa M."/>
            <person name="Sugiura M."/>
            <person name="Sasamoto S."/>
            <person name="Kimura T."/>
            <person name="Hosouchi T."/>
            <person name="Matsuno A."/>
            <person name="Muraki A."/>
            <person name="Nakazaki N."/>
            <person name="Naruo K."/>
            <person name="Okumura S."/>
            <person name="Shimpo S."/>
            <person name="Takeuchi C."/>
            <person name="Wada T."/>
            <person name="Watanabe A."/>
            <person name="Yamada M."/>
            <person name="Yasuda M."/>
            <person name="Tabata S."/>
        </authorList>
    </citation>
    <scope>NUCLEOTIDE SEQUENCE [LARGE SCALE GENOMIC DNA]</scope>
    <source>
        <strain>ATCC 27184 / PCC 6803 / Kazusa</strain>
    </source>
</reference>
<reference key="2">
    <citation type="journal article" date="2000" name="J. Bacteriol.">
        <title>Arginine catabolism in the cyanobacterium Synechocystis sp. strain PCC 6803 involves the urea cycle and arginase pathway.</title>
        <authorList>
            <person name="Quintero M.J."/>
            <person name="Muro-Pastor A.M."/>
            <person name="Herrero A."/>
            <person name="Flores E."/>
        </authorList>
    </citation>
    <scope>DISRUPTION PHENOTYPE</scope>
    <source>
        <strain>ATCC 27184 / PCC 6803 / Kazusa</strain>
    </source>
</reference>
<reference key="3">
    <citation type="journal article" date="2023" name="Sci. Adv.">
        <title>A bacterial spermidine biosynthetic pathway via carboxyaminopropylagmatine.</title>
        <authorList>
            <person name="Xi H."/>
            <person name="Nie X."/>
            <person name="Gao F."/>
            <person name="Liang X."/>
            <person name="Li H."/>
            <person name="Zhou H."/>
            <person name="Cai Y."/>
            <person name="Yang C."/>
        </authorList>
    </citation>
    <scope>FUNCTION</scope>
    <scope>CATALYTIC ACTIVITY</scope>
    <scope>COFACTOR</scope>
    <scope>BIOPHYSICOCHEMICAL PROPERTIES</scope>
    <scope>PATHWAY</scope>
    <scope>DISRUPTION PHENOTYPE</scope>
    <scope>MUTAGENESIS OF GLU-60; ARG-151 AND GLU-187</scope>
    <source>
        <strain>ATCC 27184 / PCC 6803 / Kazusa</strain>
    </source>
</reference>
<keyword id="KW-0378">Hydrolase</keyword>
<keyword id="KW-0464">Manganese</keyword>
<keyword id="KW-0479">Metal-binding</keyword>
<keyword id="KW-1185">Reference proteome</keyword>
<keyword id="KW-0745">Spermidine biosynthesis</keyword>
<comment type="function">
    <text evidence="3">Ureohydrolase involved in the biosynthesis of spermidine via the carboxyaminopropylagmatine (CAPA) pathway (PubMed:37878710). Catalyzes the conversion of aminopropylagmatine (APA) to spermidine and urea (PubMed:37878710). Is highly specific to APA and incapable of releasing measurable urea from CAPA, agmatine, arginine, guanidine, guanidinobutyrate and guanidinopropionate (PubMed:37878710).</text>
</comment>
<comment type="catalytic activity">
    <reaction evidence="3">
        <text>N(1)-(3-aminopropyl)agmatine + H2O = urea + spermidine</text>
        <dbReference type="Rhea" id="RHEA:35827"/>
        <dbReference type="ChEBI" id="CHEBI:15377"/>
        <dbReference type="ChEBI" id="CHEBI:16199"/>
        <dbReference type="ChEBI" id="CHEBI:57834"/>
        <dbReference type="ChEBI" id="CHEBI:64335"/>
        <dbReference type="EC" id="3.5.3.24"/>
    </reaction>
    <physiologicalReaction direction="left-to-right" evidence="3">
        <dbReference type="Rhea" id="RHEA:35828"/>
    </physiologicalReaction>
</comment>
<comment type="cofactor">
    <cofactor evidence="3">
        <name>Mn(2+)</name>
        <dbReference type="ChEBI" id="CHEBI:29035"/>
    </cofactor>
    <text evidence="1">Binds 2 manganese ions per subunit.</text>
</comment>
<comment type="biophysicochemical properties">
    <kinetics>
        <KM evidence="3">1.78 mM for APA</KM>
        <text evidence="3">kcat is 70.8 sec(-1) with APA as substrate.</text>
    </kinetics>
</comment>
<comment type="pathway">
    <text evidence="3">Amine and polyamine biosynthesis; spermidine biosynthesis.</text>
</comment>
<comment type="disruption phenotype">
    <text evidence="2 3">Deletion of the gene leads to substantial accumulation of agmatine, CAPA and APA, and lack of spermidine (PubMed:37878710). Mutant exhibits arginase activity, as determined in cell extracts, identical to that found in the wild-type strain (PubMed:10648527). The mutant lacks any agmatinase activity (PubMed:10648527).</text>
</comment>
<comment type="similarity">
    <text evidence="1">Belongs to the arginase family.</text>
</comment>
<protein>
    <recommendedName>
        <fullName evidence="5">N(1)-aminopropylagmatine ureohydrolase</fullName>
        <shortName evidence="5">APA ureohydrolase</shortName>
        <shortName evidence="5">APAUH</shortName>
        <ecNumber evidence="3">3.5.3.24</ecNumber>
    </recommendedName>
</protein>
<proteinExistence type="evidence at protein level"/>
<name>APAUH_SYNY3</name>
<gene>
    <name evidence="4" type="primary">speB1</name>
    <name evidence="6" type="ordered locus">sll0228</name>
</gene>
<organism>
    <name type="scientific">Synechocystis sp. (strain ATCC 27184 / PCC 6803 / Kazusa)</name>
    <dbReference type="NCBI Taxonomy" id="1111708"/>
    <lineage>
        <taxon>Bacteria</taxon>
        <taxon>Bacillati</taxon>
        <taxon>Cyanobacteriota</taxon>
        <taxon>Cyanophyceae</taxon>
        <taxon>Synechococcales</taxon>
        <taxon>Merismopediaceae</taxon>
        <taxon>Synechocystis</taxon>
    </lineage>
</organism>
<evidence type="ECO:0000255" key="1">
    <source>
        <dbReference type="PROSITE-ProRule" id="PRU00742"/>
    </source>
</evidence>
<evidence type="ECO:0000269" key="2">
    <source>
    </source>
</evidence>
<evidence type="ECO:0000269" key="3">
    <source>
    </source>
</evidence>
<evidence type="ECO:0000303" key="4">
    <source>
    </source>
</evidence>
<evidence type="ECO:0000303" key="5">
    <source>
    </source>
</evidence>
<evidence type="ECO:0000312" key="6">
    <source>
        <dbReference type="EMBL" id="BAA16710.1"/>
    </source>
</evidence>
<accession>P72703</accession>
<feature type="chain" id="PRO_0000173744" description="N(1)-aminopropylagmatine ureohydrolase">
    <location>
        <begin position="1"/>
        <end position="306"/>
    </location>
</feature>
<feature type="binding site" evidence="1">
    <location>
        <position position="121"/>
    </location>
    <ligand>
        <name>Mn(2+)</name>
        <dbReference type="ChEBI" id="CHEBI:29035"/>
        <label>1</label>
    </ligand>
</feature>
<feature type="binding site" evidence="1">
    <location>
        <position position="145"/>
    </location>
    <ligand>
        <name>Mn(2+)</name>
        <dbReference type="ChEBI" id="CHEBI:29035"/>
        <label>1</label>
    </ligand>
</feature>
<feature type="binding site" evidence="1">
    <location>
        <position position="145"/>
    </location>
    <ligand>
        <name>Mn(2+)</name>
        <dbReference type="ChEBI" id="CHEBI:29035"/>
        <label>2</label>
    </ligand>
</feature>
<feature type="binding site" evidence="1">
    <location>
        <position position="147"/>
    </location>
    <ligand>
        <name>Mn(2+)</name>
        <dbReference type="ChEBI" id="CHEBI:29035"/>
        <label>2</label>
    </ligand>
</feature>
<feature type="binding site" evidence="1">
    <location>
        <position position="149"/>
    </location>
    <ligand>
        <name>Mn(2+)</name>
        <dbReference type="ChEBI" id="CHEBI:29035"/>
        <label>1</label>
    </ligand>
</feature>
<feature type="binding site" evidence="1">
    <location>
        <position position="228"/>
    </location>
    <ligand>
        <name>Mn(2+)</name>
        <dbReference type="ChEBI" id="CHEBI:29035"/>
        <label>1</label>
    </ligand>
</feature>
<feature type="binding site" evidence="1">
    <location>
        <position position="228"/>
    </location>
    <ligand>
        <name>Mn(2+)</name>
        <dbReference type="ChEBI" id="CHEBI:29035"/>
        <label>2</label>
    </ligand>
</feature>
<feature type="binding site" evidence="1">
    <location>
        <position position="230"/>
    </location>
    <ligand>
        <name>Mn(2+)</name>
        <dbReference type="ChEBI" id="CHEBI:29035"/>
        <label>2</label>
    </ligand>
</feature>
<feature type="mutagenesis site" description="Loss of activity." evidence="3">
    <original>E</original>
    <variation>A</variation>
    <variation>Q</variation>
    <location>
        <position position="60"/>
    </location>
</feature>
<feature type="mutagenesis site" description="Retains very weak activity." evidence="3">
    <original>R</original>
    <variation>A</variation>
    <variation>N</variation>
    <location>
        <position position="151"/>
    </location>
</feature>
<feature type="mutagenesis site" description="Retains 50% of activity." evidence="3">
    <original>E</original>
    <variation>A</variation>
    <location>
        <position position="187"/>
    </location>
</feature>
<sequence length="306" mass="33463">MHSPNKFTSGPKQFLESEAITSYADAAVVVVPIPYEATTSYRKGCEHGPEAVLEASDQLEAYDEELGTSPCHDLGIYTCAPLADSNKHPALAGDAMVTEVCDGIAPFVEDGKFVVAIGGEHAITTGVVRAMQRGTSEPFTVVQIDAHGDMRDKFEGSCHNHACVMRRVLELGLPTLPIAIRAICQEEADLIREKNIPVFWAREMADNPNWINEAIASITTQKVFLTIDMDGFDPGFMPGVGTPEPGGLGWYEGLNFFRRLFQTKQVIGCDLMELAPVRGSVVSEFSTAKLAYKLMGYWGESQRKKL</sequence>